<evidence type="ECO:0000255" key="1">
    <source>
        <dbReference type="HAMAP-Rule" id="MF_01371"/>
    </source>
</evidence>
<evidence type="ECO:0000305" key="2"/>
<dbReference type="EMBL" id="CP000061">
    <property type="protein sequence ID" value="ABC65621.1"/>
    <property type="molecule type" value="Genomic_DNA"/>
</dbReference>
<dbReference type="RefSeq" id="WP_011412783.1">
    <property type="nucleotide sequence ID" value="NC_007716.1"/>
</dbReference>
<dbReference type="SMR" id="Q2NIX2"/>
<dbReference type="STRING" id="322098.AYWB_504"/>
<dbReference type="KEGG" id="ayw:AYWB_504"/>
<dbReference type="eggNOG" id="COG1841">
    <property type="taxonomic scope" value="Bacteria"/>
</dbReference>
<dbReference type="HOGENOM" id="CLU_131047_2_0_14"/>
<dbReference type="OrthoDB" id="9812790at2"/>
<dbReference type="PhylomeDB" id="Q2NIX2"/>
<dbReference type="Proteomes" id="UP000001934">
    <property type="component" value="Chromosome"/>
</dbReference>
<dbReference type="GO" id="GO:0022625">
    <property type="term" value="C:cytosolic large ribosomal subunit"/>
    <property type="evidence" value="ECO:0007669"/>
    <property type="project" value="TreeGrafter"/>
</dbReference>
<dbReference type="GO" id="GO:0003735">
    <property type="term" value="F:structural constituent of ribosome"/>
    <property type="evidence" value="ECO:0007669"/>
    <property type="project" value="InterPro"/>
</dbReference>
<dbReference type="GO" id="GO:0006412">
    <property type="term" value="P:translation"/>
    <property type="evidence" value="ECO:0007669"/>
    <property type="project" value="InterPro"/>
</dbReference>
<dbReference type="CDD" id="cd01658">
    <property type="entry name" value="Ribosomal_L30"/>
    <property type="match status" value="1"/>
</dbReference>
<dbReference type="Gene3D" id="3.30.1390.20">
    <property type="entry name" value="Ribosomal protein L30, ferredoxin-like fold domain"/>
    <property type="match status" value="1"/>
</dbReference>
<dbReference type="HAMAP" id="MF_01371_B">
    <property type="entry name" value="Ribosomal_uL30_B"/>
    <property type="match status" value="1"/>
</dbReference>
<dbReference type="InterPro" id="IPR036919">
    <property type="entry name" value="Ribo_uL30_ferredoxin-like_sf"/>
</dbReference>
<dbReference type="InterPro" id="IPR005996">
    <property type="entry name" value="Ribosomal_uL30_bac-type"/>
</dbReference>
<dbReference type="InterPro" id="IPR016082">
    <property type="entry name" value="Ribosomal_uL30_ferredoxin-like"/>
</dbReference>
<dbReference type="NCBIfam" id="TIGR01308">
    <property type="entry name" value="rpmD_bact"/>
    <property type="match status" value="1"/>
</dbReference>
<dbReference type="PANTHER" id="PTHR15892:SF2">
    <property type="entry name" value="LARGE RIBOSOMAL SUBUNIT PROTEIN UL30M"/>
    <property type="match status" value="1"/>
</dbReference>
<dbReference type="PANTHER" id="PTHR15892">
    <property type="entry name" value="MITOCHONDRIAL RIBOSOMAL PROTEIN L30"/>
    <property type="match status" value="1"/>
</dbReference>
<dbReference type="Pfam" id="PF00327">
    <property type="entry name" value="Ribosomal_L30"/>
    <property type="match status" value="1"/>
</dbReference>
<dbReference type="PIRSF" id="PIRSF002211">
    <property type="entry name" value="Ribosomal_L30_bac-type"/>
    <property type="match status" value="1"/>
</dbReference>
<dbReference type="SUPFAM" id="SSF55129">
    <property type="entry name" value="Ribosomal protein L30p/L7e"/>
    <property type="match status" value="1"/>
</dbReference>
<reference key="1">
    <citation type="journal article" date="2006" name="J. Bacteriol.">
        <title>Living with genome instability: the adaptation of phytoplasmas to diverse environments of their insect and plant hosts.</title>
        <authorList>
            <person name="Bai X."/>
            <person name="Zhang J."/>
            <person name="Ewing A."/>
            <person name="Miller S.A."/>
            <person name="Jancso Radek A."/>
            <person name="Shevchenko D.V."/>
            <person name="Tsukerman K."/>
            <person name="Walunas T."/>
            <person name="Lapidus A."/>
            <person name="Campbell J.W."/>
            <person name="Hogenhout S.A."/>
        </authorList>
    </citation>
    <scope>NUCLEOTIDE SEQUENCE [LARGE SCALE GENOMIC DNA]</scope>
    <source>
        <strain>AYWB</strain>
    </source>
</reference>
<protein>
    <recommendedName>
        <fullName evidence="1">Large ribosomal subunit protein uL30</fullName>
    </recommendedName>
    <alternativeName>
        <fullName evidence="2">50S ribosomal protein L30</fullName>
    </alternativeName>
</protein>
<organism>
    <name type="scientific">Aster yellows witches'-broom phytoplasma (strain AYWB)</name>
    <dbReference type="NCBI Taxonomy" id="322098"/>
    <lineage>
        <taxon>Bacteria</taxon>
        <taxon>Bacillati</taxon>
        <taxon>Mycoplasmatota</taxon>
        <taxon>Mollicutes</taxon>
        <taxon>Acholeplasmatales</taxon>
        <taxon>Acholeplasmataceae</taxon>
        <taxon>Candidatus Phytoplasma</taxon>
        <taxon>16SrI (Aster yellows group)</taxon>
    </lineage>
</organism>
<name>RL30_AYWBP</name>
<comment type="subunit">
    <text evidence="1">Part of the 50S ribosomal subunit.</text>
</comment>
<comment type="similarity">
    <text evidence="1">Belongs to the universal ribosomal protein uL30 family.</text>
</comment>
<sequence length="65" mass="7362">MKLKITLTKSLIACRFNQIKTAHCLGLKKINNQVIKDDTPAIHGMIKTISHLVVVEKVSYTKEQK</sequence>
<feature type="chain" id="PRO_0000347076" description="Large ribosomal subunit protein uL30">
    <location>
        <begin position="1"/>
        <end position="65"/>
    </location>
</feature>
<keyword id="KW-0687">Ribonucleoprotein</keyword>
<keyword id="KW-0689">Ribosomal protein</keyword>
<accession>Q2NIX2</accession>
<gene>
    <name evidence="1" type="primary">rpmD</name>
    <name type="ordered locus">AYWB_504</name>
</gene>
<proteinExistence type="inferred from homology"/>